<reference key="1">
    <citation type="journal article" date="2007" name="PLoS Genet.">
        <title>Genome analysis of Minibacterium massiliensis highlights the convergent evolution of water-living bacteria.</title>
        <authorList>
            <person name="Audic S."/>
            <person name="Robert C."/>
            <person name="Campagna B."/>
            <person name="Parinello H."/>
            <person name="Claverie J.-M."/>
            <person name="Raoult D."/>
            <person name="Drancourt M."/>
        </authorList>
    </citation>
    <scope>NUCLEOTIDE SEQUENCE [LARGE SCALE GENOMIC DNA]</scope>
    <source>
        <strain>Marseille</strain>
    </source>
</reference>
<evidence type="ECO:0000255" key="1">
    <source>
        <dbReference type="HAMAP-Rule" id="MF_01331"/>
    </source>
</evidence>
<evidence type="ECO:0000305" key="2"/>
<feature type="chain" id="PRO_0000354480" description="Large ribosomal subunit protein uL22">
    <location>
        <begin position="1"/>
        <end position="110"/>
    </location>
</feature>
<protein>
    <recommendedName>
        <fullName evidence="1">Large ribosomal subunit protein uL22</fullName>
    </recommendedName>
    <alternativeName>
        <fullName evidence="2">50S ribosomal protein L22</fullName>
    </alternativeName>
</protein>
<name>RL22_JANMA</name>
<proteinExistence type="inferred from homology"/>
<comment type="function">
    <text evidence="1">This protein binds specifically to 23S rRNA; its binding is stimulated by other ribosomal proteins, e.g. L4, L17, and L20. It is important during the early stages of 50S assembly. It makes multiple contacts with different domains of the 23S rRNA in the assembled 50S subunit and ribosome (By similarity).</text>
</comment>
<comment type="function">
    <text evidence="1">The globular domain of the protein is located near the polypeptide exit tunnel on the outside of the subunit, while an extended beta-hairpin is found that lines the wall of the exit tunnel in the center of the 70S ribosome.</text>
</comment>
<comment type="subunit">
    <text evidence="1">Part of the 50S ribosomal subunit.</text>
</comment>
<comment type="similarity">
    <text evidence="1">Belongs to the universal ribosomal protein uL22 family.</text>
</comment>
<dbReference type="EMBL" id="CP000269">
    <property type="protein sequence ID" value="ABR88994.1"/>
    <property type="molecule type" value="Genomic_DNA"/>
</dbReference>
<dbReference type="SMR" id="A6T3J9"/>
<dbReference type="STRING" id="375286.mma_3406"/>
<dbReference type="KEGG" id="mms:mma_3406"/>
<dbReference type="eggNOG" id="COG0091">
    <property type="taxonomic scope" value="Bacteria"/>
</dbReference>
<dbReference type="HOGENOM" id="CLU_083987_3_3_4"/>
<dbReference type="Proteomes" id="UP000006388">
    <property type="component" value="Chromosome"/>
</dbReference>
<dbReference type="GO" id="GO:0022625">
    <property type="term" value="C:cytosolic large ribosomal subunit"/>
    <property type="evidence" value="ECO:0007669"/>
    <property type="project" value="TreeGrafter"/>
</dbReference>
<dbReference type="GO" id="GO:0019843">
    <property type="term" value="F:rRNA binding"/>
    <property type="evidence" value="ECO:0007669"/>
    <property type="project" value="UniProtKB-UniRule"/>
</dbReference>
<dbReference type="GO" id="GO:0003735">
    <property type="term" value="F:structural constituent of ribosome"/>
    <property type="evidence" value="ECO:0007669"/>
    <property type="project" value="InterPro"/>
</dbReference>
<dbReference type="GO" id="GO:0006412">
    <property type="term" value="P:translation"/>
    <property type="evidence" value="ECO:0007669"/>
    <property type="project" value="UniProtKB-UniRule"/>
</dbReference>
<dbReference type="CDD" id="cd00336">
    <property type="entry name" value="Ribosomal_L22"/>
    <property type="match status" value="1"/>
</dbReference>
<dbReference type="FunFam" id="3.90.470.10:FF:000001">
    <property type="entry name" value="50S ribosomal protein L22"/>
    <property type="match status" value="1"/>
</dbReference>
<dbReference type="Gene3D" id="3.90.470.10">
    <property type="entry name" value="Ribosomal protein L22/L17"/>
    <property type="match status" value="1"/>
</dbReference>
<dbReference type="HAMAP" id="MF_01331_B">
    <property type="entry name" value="Ribosomal_uL22_B"/>
    <property type="match status" value="1"/>
</dbReference>
<dbReference type="InterPro" id="IPR001063">
    <property type="entry name" value="Ribosomal_uL22"/>
</dbReference>
<dbReference type="InterPro" id="IPR005727">
    <property type="entry name" value="Ribosomal_uL22_bac/chlpt-type"/>
</dbReference>
<dbReference type="InterPro" id="IPR047867">
    <property type="entry name" value="Ribosomal_uL22_bac/org-type"/>
</dbReference>
<dbReference type="InterPro" id="IPR018260">
    <property type="entry name" value="Ribosomal_uL22_CS"/>
</dbReference>
<dbReference type="InterPro" id="IPR036394">
    <property type="entry name" value="Ribosomal_uL22_sf"/>
</dbReference>
<dbReference type="NCBIfam" id="TIGR01044">
    <property type="entry name" value="rplV_bact"/>
    <property type="match status" value="1"/>
</dbReference>
<dbReference type="PANTHER" id="PTHR13501">
    <property type="entry name" value="CHLOROPLAST 50S RIBOSOMAL PROTEIN L22-RELATED"/>
    <property type="match status" value="1"/>
</dbReference>
<dbReference type="PANTHER" id="PTHR13501:SF8">
    <property type="entry name" value="LARGE RIBOSOMAL SUBUNIT PROTEIN UL22M"/>
    <property type="match status" value="1"/>
</dbReference>
<dbReference type="Pfam" id="PF00237">
    <property type="entry name" value="Ribosomal_L22"/>
    <property type="match status" value="1"/>
</dbReference>
<dbReference type="SUPFAM" id="SSF54843">
    <property type="entry name" value="Ribosomal protein L22"/>
    <property type="match status" value="1"/>
</dbReference>
<dbReference type="PROSITE" id="PS00464">
    <property type="entry name" value="RIBOSOMAL_L22"/>
    <property type="match status" value="1"/>
</dbReference>
<accession>A6T3J9</accession>
<organism>
    <name type="scientific">Janthinobacterium sp. (strain Marseille)</name>
    <name type="common">Minibacterium massiliensis</name>
    <dbReference type="NCBI Taxonomy" id="375286"/>
    <lineage>
        <taxon>Bacteria</taxon>
        <taxon>Pseudomonadati</taxon>
        <taxon>Pseudomonadota</taxon>
        <taxon>Betaproteobacteria</taxon>
        <taxon>Burkholderiales</taxon>
        <taxon>Oxalobacteraceae</taxon>
        <taxon>Janthinobacterium</taxon>
    </lineage>
</organism>
<keyword id="KW-0687">Ribonucleoprotein</keyword>
<keyword id="KW-0689">Ribosomal protein</keyword>
<keyword id="KW-0694">RNA-binding</keyword>
<keyword id="KW-0699">rRNA-binding</keyword>
<gene>
    <name evidence="1" type="primary">rplV</name>
    <name type="ordered locus">mma_3406</name>
</gene>
<sequence>MMETKATLRGVRLSAQKGRLVADQIRGKKVDQALNILQFSPKKGAAIIKRVLESAIANAEHNDGADIDELKVTTIYVEKGSVLKRFTARAKGRGDRISKQSCHIYVTVGN</sequence>